<proteinExistence type="evidence at transcript level"/>
<evidence type="ECO:0000255" key="1"/>
<evidence type="ECO:0000269" key="2">
    <source>
    </source>
</evidence>
<evidence type="ECO:0000269" key="3">
    <source>
    </source>
</evidence>
<evidence type="ECO:0000269" key="4">
    <source>
    </source>
</evidence>
<evidence type="ECO:0000269" key="5">
    <source>
    </source>
</evidence>
<evidence type="ECO:0000269" key="6">
    <source>
    </source>
</evidence>
<evidence type="ECO:0000269" key="7">
    <source>
    </source>
</evidence>
<evidence type="ECO:0000303" key="8">
    <source>
    </source>
</evidence>
<evidence type="ECO:0000305" key="9"/>
<evidence type="ECO:0000312" key="10">
    <source>
        <dbReference type="EMBL" id="AAL68092.1"/>
    </source>
</evidence>
<evidence type="ECO:0000312" key="11">
    <source>
        <dbReference type="EMBL" id="AAO38861.1"/>
    </source>
</evidence>
<evidence type="ECO:0000312" key="12">
    <source>
        <dbReference type="FlyBase" id="FBgn0028530"/>
    </source>
</evidence>
<evidence type="ECO:0000312" key="13">
    <source>
        <dbReference type="Proteomes" id="UP000000803"/>
    </source>
</evidence>
<organism evidence="13">
    <name type="scientific">Drosophila melanogaster</name>
    <name type="common">Fruit fly</name>
    <dbReference type="NCBI Taxonomy" id="7227"/>
    <lineage>
        <taxon>Eukaryota</taxon>
        <taxon>Metazoa</taxon>
        <taxon>Ecdysozoa</taxon>
        <taxon>Arthropoda</taxon>
        <taxon>Hexapoda</taxon>
        <taxon>Insecta</taxon>
        <taxon>Pterygota</taxon>
        <taxon>Neoptera</taxon>
        <taxon>Endopterygota</taxon>
        <taxon>Diptera</taxon>
        <taxon>Brachycera</taxon>
        <taxon>Muscomorpha</taxon>
        <taxon>Ephydroidea</taxon>
        <taxon>Drosophilidae</taxon>
        <taxon>Drosophila</taxon>
        <taxon>Sophophora</taxon>
    </lineage>
</organism>
<sequence>MIRSLLRSFETALKLHAGLNMHPMHCSRRLLFSQYENRASPSRLTSSGTLGSNEAENDYVPYRQDRETGTKTRVLLEALRERFRFTDAELQKIISDELVHRCYRGRSLTLVMDTLQLEGVSRRSFVEYPWLLSLDNKRLELKMQLLKSMDFKDINHFVPFLRLTVPRLRKLVGALNSERDAMPQRNRVYYISEKLDVSPDIVSKYLSKRLFILEMPFEMFEKNLQHMIDYNVSPINVLKDLWAFRYTPKSVQLRLERAKRAKKDKIMPWMVRCPEPILQRSLKLSLDELKVLGEFSSVVEYLAHRLGFSTSEAKAIMDKHPQVHTVRVTKIKEVLDYLLDEAQFTRFEVAQNPRILCHSLKTTKERMEELKSHGCRPSSLVILCRSRREYDKFLQNWISHERNPQSVSEG</sequence>
<name>MTTF_DROME</name>
<gene>
    <name evidence="8 12" type="primary">mTTF</name>
    <name evidence="12" type="ORF">CG18124</name>
</gene>
<keyword id="KW-0235">DNA replication</keyword>
<keyword id="KW-0496">Mitochondrion</keyword>
<keyword id="KW-1185">Reference proteome</keyword>
<keyword id="KW-0804">Transcription</keyword>
<keyword id="KW-0805">Transcription regulation</keyword>
<keyword id="KW-0809">Transit peptide</keyword>
<protein>
    <recommendedName>
        <fullName evidence="9">Transcription termination factor, mitochondrial</fullName>
    </recommendedName>
    <alternativeName>
        <fullName evidence="8">Mitochondrial transcription termination factor</fullName>
        <shortName evidence="8">mTTF</shortName>
    </alternativeName>
</protein>
<comment type="function">
    <text evidence="2 3 4 5 6 7">Transcription termination factor (PubMed:12626700, PubMed:15845400, PubMed:16648357). Binds promoter DNA and regulates mitochondrial replication and transcription (PubMed:12626700, PubMed:15845400, PubMed:16648357, PubMed:24068965). Transcription termination activity may be polarized with highest termination activity occurring when its DNA-binding site is positioned in the reverse orientation with respect to the incoming RNA polymerase (PubMed:15845400). Required for normal topology and maintenance of mitochondrial DNA (mtDNA) levels (PubMed:24068965). Regulates mtDNA replication by promoting replication pausing, possibly by acting as a natural barrier to replication fork progression (PubMed:24068965). Its function in replication pausing prevents unregulated replication that may occur for example by collisions between the machineries of DNA replication and transcription during mtDNA synthesis (PubMed:24068965). This ensures the incorporation of RNA transcripts into replication intermediates at the replication fork and allow for proper fork progression (PubMed:24068965). Shares mtDNA binding sites with the mitochondrial termination factor mTerf5 and thereby may antagonize mTerf5 function during replication to regulate pausing (PubMed:22784680, PubMed:24068965). Likely to function downstream of Dref which activates genes involved in mtDNA replication and maintenance (PubMed:19032147, PubMed:24068965).</text>
</comment>
<comment type="subcellular location">
    <subcellularLocation>
        <location evidence="4 7">Mitochondrion</location>
    </subcellularLocation>
</comment>
<comment type="developmental stage">
    <text evidence="5">Expressed throughout embryogenesis.</text>
</comment>
<comment type="disruption phenotype">
    <text evidence="7">RNAi-mediated knockdown is lethal. Most mutants fail to develop past the L3 larval stage, and the few pupal escapers do not develop to the late pupal stages. Mitochondrial DNA (mtDNA) copy number fails to increase during larval development and instead steadily decreases. Increase in broken mTDNA replication intermediates.</text>
</comment>
<comment type="similarity">
    <text evidence="9">Belongs to the mTERF family.</text>
</comment>
<reference evidence="11" key="1">
    <citation type="journal article" date="2003" name="Nucleic Acids Res.">
        <title>DmTTF, a novel mitochondrial transcription termination factor that recognises two sequences of Drosophila melanogaster mitochondrial DNA.</title>
        <authorList>
            <person name="Roberti M."/>
            <person name="Loguercio Polosa P."/>
            <person name="Bruni F."/>
            <person name="Musicco C."/>
            <person name="Gadaleta M.N."/>
            <person name="Cantatore P."/>
        </authorList>
    </citation>
    <scope>NUCLEOTIDE SEQUENCE [MRNA]</scope>
    <scope>FUNCTION</scope>
</reference>
<reference evidence="13" key="2">
    <citation type="journal article" date="2000" name="Science">
        <title>The genome sequence of Drosophila melanogaster.</title>
        <authorList>
            <person name="Adams M.D."/>
            <person name="Celniker S.E."/>
            <person name="Holt R.A."/>
            <person name="Evans C.A."/>
            <person name="Gocayne J.D."/>
            <person name="Amanatides P.G."/>
            <person name="Scherer S.E."/>
            <person name="Li P.W."/>
            <person name="Hoskins R.A."/>
            <person name="Galle R.F."/>
            <person name="George R.A."/>
            <person name="Lewis S.E."/>
            <person name="Richards S."/>
            <person name="Ashburner M."/>
            <person name="Henderson S.N."/>
            <person name="Sutton G.G."/>
            <person name="Wortman J.R."/>
            <person name="Yandell M.D."/>
            <person name="Zhang Q."/>
            <person name="Chen L.X."/>
            <person name="Brandon R.C."/>
            <person name="Rogers Y.-H.C."/>
            <person name="Blazej R.G."/>
            <person name="Champe M."/>
            <person name="Pfeiffer B.D."/>
            <person name="Wan K.H."/>
            <person name="Doyle C."/>
            <person name="Baxter E.G."/>
            <person name="Helt G."/>
            <person name="Nelson C.R."/>
            <person name="Miklos G.L.G."/>
            <person name="Abril J.F."/>
            <person name="Agbayani A."/>
            <person name="An H.-J."/>
            <person name="Andrews-Pfannkoch C."/>
            <person name="Baldwin D."/>
            <person name="Ballew R.M."/>
            <person name="Basu A."/>
            <person name="Baxendale J."/>
            <person name="Bayraktaroglu L."/>
            <person name="Beasley E.M."/>
            <person name="Beeson K.Y."/>
            <person name="Benos P.V."/>
            <person name="Berman B.P."/>
            <person name="Bhandari D."/>
            <person name="Bolshakov S."/>
            <person name="Borkova D."/>
            <person name="Botchan M.R."/>
            <person name="Bouck J."/>
            <person name="Brokstein P."/>
            <person name="Brottier P."/>
            <person name="Burtis K.C."/>
            <person name="Busam D.A."/>
            <person name="Butler H."/>
            <person name="Cadieu E."/>
            <person name="Center A."/>
            <person name="Chandra I."/>
            <person name="Cherry J.M."/>
            <person name="Cawley S."/>
            <person name="Dahlke C."/>
            <person name="Davenport L.B."/>
            <person name="Davies P."/>
            <person name="de Pablos B."/>
            <person name="Delcher A."/>
            <person name="Deng Z."/>
            <person name="Mays A.D."/>
            <person name="Dew I."/>
            <person name="Dietz S.M."/>
            <person name="Dodson K."/>
            <person name="Doup L.E."/>
            <person name="Downes M."/>
            <person name="Dugan-Rocha S."/>
            <person name="Dunkov B.C."/>
            <person name="Dunn P."/>
            <person name="Durbin K.J."/>
            <person name="Evangelista C.C."/>
            <person name="Ferraz C."/>
            <person name="Ferriera S."/>
            <person name="Fleischmann W."/>
            <person name="Fosler C."/>
            <person name="Gabrielian A.E."/>
            <person name="Garg N.S."/>
            <person name="Gelbart W.M."/>
            <person name="Glasser K."/>
            <person name="Glodek A."/>
            <person name="Gong F."/>
            <person name="Gorrell J.H."/>
            <person name="Gu Z."/>
            <person name="Guan P."/>
            <person name="Harris M."/>
            <person name="Harris N.L."/>
            <person name="Harvey D.A."/>
            <person name="Heiman T.J."/>
            <person name="Hernandez J.R."/>
            <person name="Houck J."/>
            <person name="Hostin D."/>
            <person name="Houston K.A."/>
            <person name="Howland T.J."/>
            <person name="Wei M.-H."/>
            <person name="Ibegwam C."/>
            <person name="Jalali M."/>
            <person name="Kalush F."/>
            <person name="Karpen G.H."/>
            <person name="Ke Z."/>
            <person name="Kennison J.A."/>
            <person name="Ketchum K.A."/>
            <person name="Kimmel B.E."/>
            <person name="Kodira C.D."/>
            <person name="Kraft C.L."/>
            <person name="Kravitz S."/>
            <person name="Kulp D."/>
            <person name="Lai Z."/>
            <person name="Lasko P."/>
            <person name="Lei Y."/>
            <person name="Levitsky A.A."/>
            <person name="Li J.H."/>
            <person name="Li Z."/>
            <person name="Liang Y."/>
            <person name="Lin X."/>
            <person name="Liu X."/>
            <person name="Mattei B."/>
            <person name="McIntosh T.C."/>
            <person name="McLeod M.P."/>
            <person name="McPherson D."/>
            <person name="Merkulov G."/>
            <person name="Milshina N.V."/>
            <person name="Mobarry C."/>
            <person name="Morris J."/>
            <person name="Moshrefi A."/>
            <person name="Mount S.M."/>
            <person name="Moy M."/>
            <person name="Murphy B."/>
            <person name="Murphy L."/>
            <person name="Muzny D.M."/>
            <person name="Nelson D.L."/>
            <person name="Nelson D.R."/>
            <person name="Nelson K.A."/>
            <person name="Nixon K."/>
            <person name="Nusskern D.R."/>
            <person name="Pacleb J.M."/>
            <person name="Palazzolo M."/>
            <person name="Pittman G.S."/>
            <person name="Pan S."/>
            <person name="Pollard J."/>
            <person name="Puri V."/>
            <person name="Reese M.G."/>
            <person name="Reinert K."/>
            <person name="Remington K."/>
            <person name="Saunders R.D.C."/>
            <person name="Scheeler F."/>
            <person name="Shen H."/>
            <person name="Shue B.C."/>
            <person name="Siden-Kiamos I."/>
            <person name="Simpson M."/>
            <person name="Skupski M.P."/>
            <person name="Smith T.J."/>
            <person name="Spier E."/>
            <person name="Spradling A.C."/>
            <person name="Stapleton M."/>
            <person name="Strong R."/>
            <person name="Sun E."/>
            <person name="Svirskas R."/>
            <person name="Tector C."/>
            <person name="Turner R."/>
            <person name="Venter E."/>
            <person name="Wang A.H."/>
            <person name="Wang X."/>
            <person name="Wang Z.-Y."/>
            <person name="Wassarman D.A."/>
            <person name="Weinstock G.M."/>
            <person name="Weissenbach J."/>
            <person name="Williams S.M."/>
            <person name="Woodage T."/>
            <person name="Worley K.C."/>
            <person name="Wu D."/>
            <person name="Yang S."/>
            <person name="Yao Q.A."/>
            <person name="Ye J."/>
            <person name="Yeh R.-F."/>
            <person name="Zaveri J.S."/>
            <person name="Zhan M."/>
            <person name="Zhang G."/>
            <person name="Zhao Q."/>
            <person name="Zheng L."/>
            <person name="Zheng X.H."/>
            <person name="Zhong F.N."/>
            <person name="Zhong W."/>
            <person name="Zhou X."/>
            <person name="Zhu S.C."/>
            <person name="Zhu X."/>
            <person name="Smith H.O."/>
            <person name="Gibbs R.A."/>
            <person name="Myers E.W."/>
            <person name="Rubin G.M."/>
            <person name="Venter J.C."/>
        </authorList>
    </citation>
    <scope>NUCLEOTIDE SEQUENCE [LARGE SCALE GENOMIC DNA]</scope>
    <source>
        <strain evidence="13">Berkeley</strain>
    </source>
</reference>
<reference evidence="13" key="3">
    <citation type="journal article" date="2002" name="Genome Biol.">
        <title>Annotation of the Drosophila melanogaster euchromatic genome: a systematic review.</title>
        <authorList>
            <person name="Misra S."/>
            <person name="Crosby M.A."/>
            <person name="Mungall C.J."/>
            <person name="Matthews B.B."/>
            <person name="Campbell K.S."/>
            <person name="Hradecky P."/>
            <person name="Huang Y."/>
            <person name="Kaminker J.S."/>
            <person name="Millburn G.H."/>
            <person name="Prochnik S.E."/>
            <person name="Smith C.D."/>
            <person name="Tupy J.L."/>
            <person name="Whitfield E.J."/>
            <person name="Bayraktaroglu L."/>
            <person name="Berman B.P."/>
            <person name="Bettencourt B.R."/>
            <person name="Celniker S.E."/>
            <person name="de Grey A.D.N.J."/>
            <person name="Drysdale R.A."/>
            <person name="Harris N.L."/>
            <person name="Richter J."/>
            <person name="Russo S."/>
            <person name="Schroeder A.J."/>
            <person name="Shu S.Q."/>
            <person name="Stapleton M."/>
            <person name="Yamada C."/>
            <person name="Ashburner M."/>
            <person name="Gelbart W.M."/>
            <person name="Rubin G.M."/>
            <person name="Lewis S.E."/>
        </authorList>
    </citation>
    <scope>GENOME REANNOTATION</scope>
    <source>
        <strain evidence="13">Berkeley</strain>
    </source>
</reference>
<reference evidence="10" key="4">
    <citation type="journal article" date="2002" name="Genome Biol.">
        <title>A Drosophila full-length cDNA resource.</title>
        <authorList>
            <person name="Stapleton M."/>
            <person name="Carlson J.W."/>
            <person name="Brokstein P."/>
            <person name="Yu C."/>
            <person name="Champe M."/>
            <person name="George R.A."/>
            <person name="Guarin H."/>
            <person name="Kronmiller B."/>
            <person name="Pacleb J.M."/>
            <person name="Park S."/>
            <person name="Wan K.H."/>
            <person name="Rubin G.M."/>
            <person name="Celniker S.E."/>
        </authorList>
    </citation>
    <scope>NUCLEOTIDE SEQUENCE [LARGE SCALE MRNA]</scope>
    <source>
        <strain evidence="10">Berkeley</strain>
        <tissue evidence="10">Testis</tissue>
    </source>
</reference>
<reference evidence="9" key="5">
    <citation type="journal article" date="2005" name="Biochem. Biophys. Res. Commun.">
        <title>In vitro transcription termination activity of the Drosophila mitochondrial DNA-binding protein DmTTF.</title>
        <authorList>
            <person name="Roberti M."/>
            <person name="Fernandez-Silva P."/>
            <person name="Polosa P.L."/>
            <person name="Fernandez-Vizarra E."/>
            <person name="Bruni F."/>
            <person name="Deceglie S."/>
            <person name="Montoya J."/>
            <person name="Gadaleta M.N."/>
            <person name="Cantatore P."/>
        </authorList>
    </citation>
    <scope>FUNCTION</scope>
</reference>
<reference evidence="9" key="6">
    <citation type="journal article" date="2006" name="Nucleic Acids Res.">
        <title>The Drosophila termination factor DmTTF regulates in vivo mitochondrial transcription.</title>
        <authorList>
            <person name="Roberti M."/>
            <person name="Bruni F."/>
            <person name="Polosa P.L."/>
            <person name="Gadaleta M.N."/>
            <person name="Cantatore P."/>
        </authorList>
    </citation>
    <scope>FUNCTION</scope>
    <scope>SUBCELLULAR LOCATION</scope>
</reference>
<reference evidence="9" key="7">
    <citation type="journal article" date="2009" name="Biochem. J.">
        <title>The Drosophila nuclear factor DREF positively regulates the expression of the mitochondrial transcription termination factor DmTTF.</title>
        <authorList>
            <person name="Fernandez-Moreno M.A."/>
            <person name="Bruni F."/>
            <person name="Adan C."/>
            <person name="Sierra R.H."/>
            <person name="Polosa P.L."/>
            <person name="Cantatore P."/>
            <person name="Garesse R."/>
            <person name="Roberti M."/>
        </authorList>
    </citation>
    <scope>FUNCTION</scope>
    <scope>DEVELOPMENTAL STAGE</scope>
</reference>
<reference evidence="9" key="8">
    <citation type="journal article" date="2012" name="Mitochondrion">
        <title>D-MTERF5 is a novel factor modulating transcription in Drosophila mitochondria.</title>
        <authorList>
            <person name="Bruni F."/>
            <person name="Manzari C."/>
            <person name="Filice M."/>
            <person name="Loguercio Polosa P."/>
            <person name="Colella M."/>
            <person name="Carmone C."/>
            <person name="Hambardjieva E."/>
            <person name="Garcia-Diaz M."/>
            <person name="Cantatore P."/>
            <person name="Roberti M."/>
        </authorList>
    </citation>
    <scope>FUNCTION</scope>
</reference>
<reference evidence="9" key="9">
    <citation type="journal article" date="2013" name="PLoS Genet.">
        <title>Mitochondrial transcription terminator family members mTTF and mTerf5 have opposing roles in coordination of mtDNA synthesis.</title>
        <authorList>
            <person name="Joers P."/>
            <person name="Lewis S.C."/>
            <person name="Fukuoh A."/>
            <person name="Parhiala M."/>
            <person name="Ellilae S."/>
            <person name="Holt I.J."/>
            <person name="Jacobs H.T."/>
        </authorList>
    </citation>
    <scope>FUNCTION</scope>
    <scope>SUBCELLULAR LOCATION</scope>
    <scope>DISRUPTION PHENOTYPE</scope>
</reference>
<dbReference type="EMBL" id="AY196479">
    <property type="protein sequence ID" value="AAO38861.1"/>
    <property type="molecule type" value="mRNA"/>
</dbReference>
<dbReference type="EMBL" id="AE014134">
    <property type="protein sequence ID" value="AAF53386.1"/>
    <property type="molecule type" value="Genomic_DNA"/>
</dbReference>
<dbReference type="EMBL" id="AY075225">
    <property type="protein sequence ID" value="AAL68092.1"/>
    <property type="molecule type" value="mRNA"/>
</dbReference>
<dbReference type="RefSeq" id="NP_609709.1">
    <property type="nucleotide sequence ID" value="NM_135865.4"/>
</dbReference>
<dbReference type="FunCoup" id="Q9V3F3">
    <property type="interactions" value="169"/>
</dbReference>
<dbReference type="IntAct" id="Q9V3F3">
    <property type="interactions" value="2"/>
</dbReference>
<dbReference type="STRING" id="7227.FBpp0080213"/>
<dbReference type="PaxDb" id="7227-FBpp0080213"/>
<dbReference type="DNASU" id="34837"/>
<dbReference type="EnsemblMetazoa" id="FBtr0080641">
    <property type="protein sequence ID" value="FBpp0080213"/>
    <property type="gene ID" value="FBgn0028530"/>
</dbReference>
<dbReference type="GeneID" id="34837"/>
<dbReference type="KEGG" id="dme:Dmel_CG18124"/>
<dbReference type="UCSC" id="CG18124-RA">
    <property type="organism name" value="d. melanogaster"/>
</dbReference>
<dbReference type="AGR" id="FB:FBgn0028530"/>
<dbReference type="CTD" id="34837"/>
<dbReference type="FlyBase" id="FBgn0028530">
    <property type="gene designation" value="mTTF"/>
</dbReference>
<dbReference type="VEuPathDB" id="VectorBase:FBgn0028530"/>
<dbReference type="eggNOG" id="ENOG502S44V">
    <property type="taxonomic scope" value="Eukaryota"/>
</dbReference>
<dbReference type="GeneTree" id="ENSGT00530000063817"/>
<dbReference type="HOGENOM" id="CLU_664440_0_0_1"/>
<dbReference type="InParanoid" id="Q9V3F3"/>
<dbReference type="OMA" id="FRYTPKS"/>
<dbReference type="OrthoDB" id="75923at2759"/>
<dbReference type="PhylomeDB" id="Q9V3F3"/>
<dbReference type="Reactome" id="R-DME-163316">
    <property type="pathway name" value="Mitochondrial transcription termination"/>
</dbReference>
<dbReference type="BioGRID-ORCS" id="34837">
    <property type="hits" value="1 hit in 1 CRISPR screen"/>
</dbReference>
<dbReference type="GenomeRNAi" id="34837"/>
<dbReference type="PRO" id="PR:Q9V3F3"/>
<dbReference type="Proteomes" id="UP000000803">
    <property type="component" value="Chromosome 2L"/>
</dbReference>
<dbReference type="Bgee" id="FBgn0028530">
    <property type="expression patterns" value="Expressed in spermathecum and 43 other cell types or tissues"/>
</dbReference>
<dbReference type="GO" id="GO:0005759">
    <property type="term" value="C:mitochondrial matrix"/>
    <property type="evidence" value="ECO:0000318"/>
    <property type="project" value="GO_Central"/>
</dbReference>
<dbReference type="GO" id="GO:0005739">
    <property type="term" value="C:mitochondrion"/>
    <property type="evidence" value="ECO:0000314"/>
    <property type="project" value="FlyBase"/>
</dbReference>
<dbReference type="GO" id="GO:0003677">
    <property type="term" value="F:DNA binding"/>
    <property type="evidence" value="ECO:0000314"/>
    <property type="project" value="FlyBase"/>
</dbReference>
<dbReference type="GO" id="GO:0003690">
    <property type="term" value="F:double-stranded DNA binding"/>
    <property type="evidence" value="ECO:0007669"/>
    <property type="project" value="InterPro"/>
</dbReference>
<dbReference type="GO" id="GO:0003676">
    <property type="term" value="F:nucleic acid binding"/>
    <property type="evidence" value="ECO:0000318"/>
    <property type="project" value="GO_Central"/>
</dbReference>
<dbReference type="GO" id="GO:0006260">
    <property type="term" value="P:DNA replication"/>
    <property type="evidence" value="ECO:0007669"/>
    <property type="project" value="UniProtKB-KW"/>
</dbReference>
<dbReference type="GO" id="GO:0006355">
    <property type="term" value="P:regulation of DNA-templated transcription"/>
    <property type="evidence" value="ECO:0007669"/>
    <property type="project" value="InterPro"/>
</dbReference>
<dbReference type="GO" id="GO:0006393">
    <property type="term" value="P:termination of mitochondrial transcription"/>
    <property type="evidence" value="ECO:0000314"/>
    <property type="project" value="FlyBase"/>
</dbReference>
<dbReference type="FunFam" id="1.25.70.10:FF:000024">
    <property type="entry name" value="Transcription termination factor, mitochondrial"/>
    <property type="match status" value="1"/>
</dbReference>
<dbReference type="Gene3D" id="1.25.70.10">
    <property type="entry name" value="Transcription termination factor 3, mitochondrial"/>
    <property type="match status" value="1"/>
</dbReference>
<dbReference type="InterPro" id="IPR003690">
    <property type="entry name" value="MTERF"/>
</dbReference>
<dbReference type="InterPro" id="IPR038538">
    <property type="entry name" value="MTERF_sf"/>
</dbReference>
<dbReference type="PANTHER" id="PTHR15437">
    <property type="entry name" value="TRANSCRIPTION TERMINATION FACTOR, MITOCHONDRIAL"/>
    <property type="match status" value="1"/>
</dbReference>
<dbReference type="PANTHER" id="PTHR15437:SF6">
    <property type="entry name" value="TRANSCRIPTION TERMINATION FACTOR, MITOCHONDRIAL"/>
    <property type="match status" value="1"/>
</dbReference>
<dbReference type="Pfam" id="PF02536">
    <property type="entry name" value="mTERF"/>
    <property type="match status" value="1"/>
</dbReference>
<dbReference type="SMART" id="SM00733">
    <property type="entry name" value="Mterf"/>
    <property type="match status" value="3"/>
</dbReference>
<feature type="transit peptide" description="Mitochondrion" evidence="1">
    <location>
        <begin position="1"/>
        <end position="44"/>
    </location>
</feature>
<feature type="chain" id="PRO_0000438974" description="Transcription termination factor, mitochondrial" evidence="1">
    <location>
        <begin position="45"/>
        <end position="410"/>
    </location>
</feature>
<feature type="sequence conflict" description="In Ref. 1; AAO38861." evidence="9" ref="1">
    <original>S</original>
    <variation>P</variation>
    <location>
        <position position="46"/>
    </location>
</feature>
<feature type="sequence conflict" description="In Ref. 1; AAO38861." evidence="9" ref="1">
    <original>T</original>
    <variation>A</variation>
    <location>
        <position position="72"/>
    </location>
</feature>
<feature type="sequence conflict" description="In Ref. 1; AAO38861." evidence="9" ref="1">
    <original>V</original>
    <variation>I</variation>
    <location>
        <position position="111"/>
    </location>
</feature>
<feature type="sequence conflict" description="In Ref. 1; AAO38861." evidence="9" ref="1">
    <original>N</original>
    <variation>T</variation>
    <location>
        <position position="223"/>
    </location>
</feature>
<accession>Q9V3F3</accession>
<accession>Q86LS0</accession>